<proteinExistence type="predicted"/>
<reference key="1">
    <citation type="journal article" date="2002" name="Proc. Natl. Acad. Sci. U.S.A.">
        <title>Extensive mosaic structure revealed by the complete genome sequence of uropathogenic Escherichia coli.</title>
        <authorList>
            <person name="Welch R.A."/>
            <person name="Burland V."/>
            <person name="Plunkett G. III"/>
            <person name="Redford P."/>
            <person name="Roesch P."/>
            <person name="Rasko D."/>
            <person name="Buckles E.L."/>
            <person name="Liou S.-R."/>
            <person name="Boutin A."/>
            <person name="Hackett J."/>
            <person name="Stroud D."/>
            <person name="Mayhew G.F."/>
            <person name="Rose D.J."/>
            <person name="Zhou S."/>
            <person name="Schwartz D.C."/>
            <person name="Perna N.T."/>
            <person name="Mobley H.L.T."/>
            <person name="Donnenberg M.S."/>
            <person name="Blattner F.R."/>
        </authorList>
    </citation>
    <scope>NUCLEOTIDE SEQUENCE [LARGE SCALE GENOMIC DNA]</scope>
    <source>
        <strain>CFT073 / ATCC 700928 / UPEC</strain>
    </source>
</reference>
<comment type="sequence caution" evidence="1">
    <conflict type="erroneous initiation">
        <sequence resource="EMBL-CDS" id="AAN83736"/>
    </conflict>
</comment>
<keyword id="KW-1185">Reference proteome</keyword>
<accession>P0ADE3</accession>
<accession>P39318</accession>
<evidence type="ECO:0000305" key="1"/>
<protein>
    <recommendedName>
        <fullName>Uncharacterized protein YtfK</fullName>
    </recommendedName>
</protein>
<feature type="chain" id="PRO_0000169829" description="Uncharacterized protein YtfK">
    <location>
        <begin position="1"/>
        <end position="68"/>
    </location>
</feature>
<name>YTFK_ECOL6</name>
<gene>
    <name type="primary">ytfK</name>
    <name type="ordered locus">c5315</name>
</gene>
<dbReference type="EMBL" id="AE014075">
    <property type="protein sequence ID" value="AAN83736.1"/>
    <property type="status" value="ALT_INIT"/>
    <property type="molecule type" value="Genomic_DNA"/>
</dbReference>
<dbReference type="RefSeq" id="WP_000689228.1">
    <property type="nucleotide sequence ID" value="NZ_CP051263.1"/>
</dbReference>
<dbReference type="SMR" id="P0ADE3"/>
<dbReference type="STRING" id="199310.c5315"/>
<dbReference type="KEGG" id="ecc:c5315"/>
<dbReference type="eggNOG" id="ENOG5032STK">
    <property type="taxonomic scope" value="Bacteria"/>
</dbReference>
<dbReference type="HOGENOM" id="CLU_188461_0_0_6"/>
<dbReference type="Proteomes" id="UP000001410">
    <property type="component" value="Chromosome"/>
</dbReference>
<dbReference type="Gene3D" id="3.30.1910.10">
    <property type="entry name" value="so0334 like domain"/>
    <property type="match status" value="1"/>
</dbReference>
<dbReference type="InterPro" id="IPR009491">
    <property type="entry name" value="DUF1107"/>
</dbReference>
<dbReference type="Pfam" id="PF06526">
    <property type="entry name" value="DUF1107"/>
    <property type="match status" value="1"/>
</dbReference>
<sequence length="68" mass="8072">MKIFQRYNPLQVAKYVKILFRGRLYIKDVGAFEFDKGKILIPKVKDKLHLSVMSEVNRQVMRLQTEMA</sequence>
<organism>
    <name type="scientific">Escherichia coli O6:H1 (strain CFT073 / ATCC 700928 / UPEC)</name>
    <dbReference type="NCBI Taxonomy" id="199310"/>
    <lineage>
        <taxon>Bacteria</taxon>
        <taxon>Pseudomonadati</taxon>
        <taxon>Pseudomonadota</taxon>
        <taxon>Gammaproteobacteria</taxon>
        <taxon>Enterobacterales</taxon>
        <taxon>Enterobacteriaceae</taxon>
        <taxon>Escherichia</taxon>
    </lineage>
</organism>